<dbReference type="EMBL" id="BA000023">
    <property type="protein sequence ID" value="BAB67270.1"/>
    <property type="molecule type" value="Genomic_DNA"/>
</dbReference>
<dbReference type="RefSeq" id="WP_010980245.1">
    <property type="nucleotide sequence ID" value="NC_003106.2"/>
</dbReference>
<dbReference type="SMR" id="Q96YK7"/>
<dbReference type="STRING" id="273063.STK_21650"/>
<dbReference type="GeneID" id="1460238"/>
<dbReference type="KEGG" id="sto:STK_21650"/>
<dbReference type="PATRIC" id="fig|273063.9.peg.2458"/>
<dbReference type="eggNOG" id="arCOG00467">
    <property type="taxonomic scope" value="Archaea"/>
</dbReference>
<dbReference type="OrthoDB" id="195574at2157"/>
<dbReference type="Proteomes" id="UP000001015">
    <property type="component" value="Chromosome"/>
</dbReference>
<dbReference type="GO" id="GO:0005524">
    <property type="term" value="F:ATP binding"/>
    <property type="evidence" value="ECO:0007669"/>
    <property type="project" value="UniProtKB-UniRule"/>
</dbReference>
<dbReference type="GO" id="GO:0016887">
    <property type="term" value="F:ATP hydrolysis activity"/>
    <property type="evidence" value="ECO:0007669"/>
    <property type="project" value="InterPro"/>
</dbReference>
<dbReference type="GO" id="GO:0006260">
    <property type="term" value="P:DNA replication"/>
    <property type="evidence" value="ECO:0007669"/>
    <property type="project" value="UniProtKB-UniRule"/>
</dbReference>
<dbReference type="CDD" id="cd08768">
    <property type="entry name" value="Cdc6_C"/>
    <property type="match status" value="1"/>
</dbReference>
<dbReference type="FunFam" id="3.40.50.300:FF:003245">
    <property type="entry name" value="ORC1-type DNA replication protein"/>
    <property type="match status" value="1"/>
</dbReference>
<dbReference type="Gene3D" id="1.10.8.60">
    <property type="match status" value="1"/>
</dbReference>
<dbReference type="Gene3D" id="3.40.50.300">
    <property type="entry name" value="P-loop containing nucleotide triphosphate hydrolases"/>
    <property type="match status" value="1"/>
</dbReference>
<dbReference type="Gene3D" id="1.10.10.10">
    <property type="entry name" value="Winged helix-like DNA-binding domain superfamily/Winged helix DNA-binding domain"/>
    <property type="match status" value="1"/>
</dbReference>
<dbReference type="HAMAP" id="MF_01407">
    <property type="entry name" value="ORC1_type_DNA_replic_protein"/>
    <property type="match status" value="1"/>
</dbReference>
<dbReference type="InterPro" id="IPR003593">
    <property type="entry name" value="AAA+_ATPase"/>
</dbReference>
<dbReference type="InterPro" id="IPR049945">
    <property type="entry name" value="AAA_22"/>
</dbReference>
<dbReference type="InterPro" id="IPR015163">
    <property type="entry name" value="Cdc6_C"/>
</dbReference>
<dbReference type="InterPro" id="IPR055237">
    <property type="entry name" value="Cdc6_lid"/>
</dbReference>
<dbReference type="InterPro" id="IPR050311">
    <property type="entry name" value="ORC1/CDC6"/>
</dbReference>
<dbReference type="InterPro" id="IPR014277">
    <property type="entry name" value="Orc1/Cdc6_arc"/>
</dbReference>
<dbReference type="InterPro" id="IPR027417">
    <property type="entry name" value="P-loop_NTPase"/>
</dbReference>
<dbReference type="InterPro" id="IPR036388">
    <property type="entry name" value="WH-like_DNA-bd_sf"/>
</dbReference>
<dbReference type="InterPro" id="IPR036390">
    <property type="entry name" value="WH_DNA-bd_sf"/>
</dbReference>
<dbReference type="NCBIfam" id="TIGR02928">
    <property type="entry name" value="orc1/cdc6 family replication initiation protein"/>
    <property type="match status" value="1"/>
</dbReference>
<dbReference type="PANTHER" id="PTHR10763:SF26">
    <property type="entry name" value="CELL DIVISION CONTROL PROTEIN 6 HOMOLOG"/>
    <property type="match status" value="1"/>
</dbReference>
<dbReference type="PANTHER" id="PTHR10763">
    <property type="entry name" value="CELL DIVISION CONTROL PROTEIN 6-RELATED"/>
    <property type="match status" value="1"/>
</dbReference>
<dbReference type="Pfam" id="PF13401">
    <property type="entry name" value="AAA_22"/>
    <property type="match status" value="1"/>
</dbReference>
<dbReference type="Pfam" id="PF09079">
    <property type="entry name" value="Cdc6_C"/>
    <property type="match status" value="1"/>
</dbReference>
<dbReference type="Pfam" id="PF22703">
    <property type="entry name" value="Cdc6_lid"/>
    <property type="match status" value="1"/>
</dbReference>
<dbReference type="SMART" id="SM00382">
    <property type="entry name" value="AAA"/>
    <property type="match status" value="1"/>
</dbReference>
<dbReference type="SMART" id="SM01074">
    <property type="entry name" value="Cdc6_C"/>
    <property type="match status" value="1"/>
</dbReference>
<dbReference type="SUPFAM" id="SSF52540">
    <property type="entry name" value="P-loop containing nucleoside triphosphate hydrolases"/>
    <property type="match status" value="1"/>
</dbReference>
<dbReference type="SUPFAM" id="SSF46785">
    <property type="entry name" value="Winged helix' DNA-binding domain"/>
    <property type="match status" value="1"/>
</dbReference>
<proteinExistence type="inferred from homology"/>
<reference key="1">
    <citation type="journal article" date="2001" name="DNA Res.">
        <title>Complete genome sequence of an aerobic thermoacidophilic Crenarchaeon, Sulfolobus tokodaii strain7.</title>
        <authorList>
            <person name="Kawarabayasi Y."/>
            <person name="Hino Y."/>
            <person name="Horikawa H."/>
            <person name="Jin-no K."/>
            <person name="Takahashi M."/>
            <person name="Sekine M."/>
            <person name="Baba S."/>
            <person name="Ankai A."/>
            <person name="Kosugi H."/>
            <person name="Hosoyama A."/>
            <person name="Fukui S."/>
            <person name="Nagai Y."/>
            <person name="Nishijima K."/>
            <person name="Otsuka R."/>
            <person name="Nakazawa H."/>
            <person name="Takamiya M."/>
            <person name="Kato Y."/>
            <person name="Yoshizawa T."/>
            <person name="Tanaka T."/>
            <person name="Kudoh Y."/>
            <person name="Yamazaki J."/>
            <person name="Kushida N."/>
            <person name="Oguchi A."/>
            <person name="Aoki K."/>
            <person name="Masuda S."/>
            <person name="Yanagii M."/>
            <person name="Nishimura M."/>
            <person name="Yamagishi A."/>
            <person name="Oshima T."/>
            <person name="Kikuchi H."/>
        </authorList>
    </citation>
    <scope>NUCLEOTIDE SEQUENCE [LARGE SCALE GENOMIC DNA]</scope>
    <source>
        <strain>DSM 16993 / JCM 10545 / NBRC 100140 / 7</strain>
    </source>
</reference>
<name>CDC63_SULTO</name>
<accession>Q96YK7</accession>
<comment type="function">
    <text evidence="1">Involved in regulation of DNA replication.</text>
</comment>
<comment type="similarity">
    <text evidence="1">Belongs to the CDC6/cdc18 family.</text>
</comment>
<evidence type="ECO:0000255" key="1">
    <source>
        <dbReference type="HAMAP-Rule" id="MF_01407"/>
    </source>
</evidence>
<feature type="chain" id="PRO_0000151023" description="ORC1-type DNA replication protein 3">
    <location>
        <begin position="1"/>
        <end position="386"/>
    </location>
</feature>
<feature type="binding site" evidence="1">
    <location>
        <begin position="65"/>
        <end position="69"/>
    </location>
    <ligand>
        <name>ATP</name>
        <dbReference type="ChEBI" id="CHEBI:30616"/>
    </ligand>
</feature>
<feature type="binding site" evidence="1">
    <location>
        <position position="206"/>
    </location>
    <ligand>
        <name>ATP</name>
        <dbReference type="ChEBI" id="CHEBI:30616"/>
    </ligand>
</feature>
<organism>
    <name type="scientific">Sulfurisphaera tokodaii (strain DSM 16993 / JCM 10545 / NBRC 100140 / 7)</name>
    <name type="common">Sulfolobus tokodaii</name>
    <dbReference type="NCBI Taxonomy" id="273063"/>
    <lineage>
        <taxon>Archaea</taxon>
        <taxon>Thermoproteota</taxon>
        <taxon>Thermoprotei</taxon>
        <taxon>Sulfolobales</taxon>
        <taxon>Sulfolobaceae</taxon>
        <taxon>Sulfurisphaera</taxon>
    </lineage>
</organism>
<sequence length="386" mass="44022">MSIRDTLKGGKGEVIKDPRVFIDPLTVFKDIPFREDILKEVAVAVRYFVKSDVKFSTLFLGLTGTGKTFVARYMLNEIEEVKQEDSDYSKVKQAYVNCREVGGTPQAVLSALTERLTTDEVPKHGINLGEYIEKIKEELNGKKALVYLDEVDTLIKRRGGDIVLYQLLRADADISVIMISNDINIRDYMEPRVLSSLGPTVFFKPYDAEQLKHILSIYAEYGLYRGTYDDNILSYIAAISAKEHGDARKAVNLLFRAAQLASGEGFIRKDHVDRAIIEYEQERLIEAIKALPFHYKLALMATMDAEDVVTAHKIYSDLCNQYKQKPLSYRRFSDIISELDMFGIIKVKIINKGRAGGIRKYIEITDKDKIRKALEDTMNLGFEEQW</sequence>
<protein>
    <recommendedName>
        <fullName evidence="1">ORC1-type DNA replication protein 3</fullName>
    </recommendedName>
</protein>
<gene>
    <name type="primary">cdc6-3</name>
    <name type="ordered locus">STK_21650</name>
</gene>
<keyword id="KW-0067">ATP-binding</keyword>
<keyword id="KW-0235">DNA replication</keyword>
<keyword id="KW-0547">Nucleotide-binding</keyword>
<keyword id="KW-1185">Reference proteome</keyword>